<feature type="chain" id="PRO_0000462496" description="Protein PA-X">
    <location>
        <begin position="1"/>
        <end position="252"/>
    </location>
</feature>
<feature type="active site" evidence="2">
    <location>
        <position position="80"/>
    </location>
</feature>
<feature type="active site" evidence="2">
    <location>
        <position position="108"/>
    </location>
</feature>
<feature type="site" description="Important for efficient shutoff activity and nuclear localization" evidence="4">
    <location>
        <position position="195"/>
    </location>
</feature>
<feature type="site" description="Important for efficient shutoff activity and nuclear localization" evidence="4">
    <location>
        <position position="198"/>
    </location>
</feature>
<feature type="site" description="Important for efficient shutoff activity and nuclear localization" evidence="4">
    <location>
        <position position="199"/>
    </location>
</feature>
<feature type="site" description="Important for efficient shutoff activity" evidence="3">
    <location>
        <position position="202"/>
    </location>
</feature>
<feature type="site" description="Important for efficient shutoff activity" evidence="3">
    <location>
        <position position="203"/>
    </location>
</feature>
<feature type="site" description="Important for efficient shutoff activity" evidence="3">
    <location>
        <position position="206"/>
    </location>
</feature>
<proteinExistence type="evidence at protein level"/>
<name>PAX_I04A1</name>
<organism>
    <name type="scientific">Influenza A virus (strain A/Vietnam/1203/2004 H5N1)</name>
    <dbReference type="NCBI Taxonomy" id="284218"/>
    <lineage>
        <taxon>Viruses</taxon>
        <taxon>Riboviria</taxon>
        <taxon>Orthornavirae</taxon>
        <taxon>Negarnaviricota</taxon>
        <taxon>Polyploviricotina</taxon>
        <taxon>Insthoviricetes</taxon>
        <taxon>Articulavirales</taxon>
        <taxon>Orthomyxoviridae</taxon>
        <taxon>Alphainfluenzavirus</taxon>
        <taxon>Alphainfluenzavirus influenzae</taxon>
        <taxon>Influenza A virus</taxon>
    </lineage>
</organism>
<protein>
    <recommendedName>
        <fullName>Protein PA-X</fullName>
    </recommendedName>
</protein>
<gene>
    <name type="primary">PA</name>
</gene>
<organismHost>
    <name type="scientific">Aves</name>
    <dbReference type="NCBI Taxonomy" id="8782"/>
</organismHost>
<organismHost>
    <name type="scientific">Homo sapiens</name>
    <name type="common">Human</name>
    <dbReference type="NCBI Taxonomy" id="9606"/>
</organismHost>
<organismHost>
    <name type="scientific">Mustela putorius furo</name>
    <name type="common">European domestic ferret</name>
    <name type="synonym">Mustela furo</name>
    <dbReference type="NCBI Taxonomy" id="9669"/>
</organismHost>
<reference key="1">
    <citation type="journal article" date="2005" name="J. Virol.">
        <title>Lethality to ferrets of H5N1 influenza viruses isolated from humans and poultry in 2004.</title>
        <authorList>
            <person name="Govorkova E.A."/>
            <person name="Rehg J.E."/>
            <person name="Krauss S."/>
            <person name="Yen H.L."/>
            <person name="Guan Y."/>
            <person name="Peiris M."/>
            <person name="Nguyen T.D."/>
            <person name="Hanh T.H."/>
            <person name="Puthavathana P."/>
            <person name="Long H.T."/>
            <person name="Buranathai C."/>
            <person name="Lim W."/>
            <person name="Webster R.G."/>
            <person name="Hoffmann E."/>
        </authorList>
    </citation>
    <scope>NUCLEOTIDE SEQUENCE [GENOMIC DNA]</scope>
    <source>
        <strain>A/Vietnam/1203/2004</strain>
    </source>
</reference>
<reference key="2">
    <citation type="journal article" date="2023" name="Nat. Commun.">
        <title>Proteomic and genetic analyses of influenza A viruses identify pan-viral host targets.</title>
        <authorList>
            <person name="Haas K.M."/>
            <person name="McGregor M.J."/>
            <person name="Bouhaddou M."/>
            <person name="Polacco B.J."/>
            <person name="Kim E.Y."/>
            <person name="Nguyen T.T."/>
            <person name="Newton B.W."/>
            <person name="Urbanowski M."/>
            <person name="Kim H."/>
            <person name="Williams M.A.P."/>
            <person name="Rezelj V.V."/>
            <person name="Hardy A."/>
            <person name="Fossati A."/>
            <person name="Stevenson E.J."/>
            <person name="Sukerman E."/>
            <person name="Kim T."/>
            <person name="Penugonda S."/>
            <person name="Moreno E."/>
            <person name="Braberg H."/>
            <person name="Zhou Y."/>
            <person name="Metreveli G."/>
            <person name="Harjai B."/>
            <person name="Tummino T.A."/>
            <person name="Melnyk J.E."/>
            <person name="Soucheray M."/>
            <person name="Batra J."/>
            <person name="Pache L."/>
            <person name="Martin-Sancho L."/>
            <person name="Carlson-Stevermer J."/>
            <person name="Jureka A.S."/>
            <person name="Basler C.F."/>
            <person name="Shokat K.M."/>
            <person name="Shoichet B.K."/>
            <person name="Shriver L.P."/>
            <person name="Johnson J.R."/>
            <person name="Shaw M.L."/>
            <person name="Chanda S.K."/>
            <person name="Roden D.M."/>
            <person name="Carter T.C."/>
            <person name="Kottyan L.C."/>
            <person name="Chisholm R.L."/>
            <person name="Pacheco J.A."/>
            <person name="Smith M.E."/>
            <person name="Schrodi S.J."/>
            <person name="Albrecht R.A."/>
            <person name="Vignuzzi M."/>
            <person name="Zuliani-Alvarez L."/>
            <person name="Swaney D.L."/>
            <person name="Eckhardt M."/>
            <person name="Wolinsky S.M."/>
            <person name="White K.M."/>
            <person name="Hultquist J.F."/>
            <person name="Kaake R.M."/>
            <person name="Garcia-Sastre A."/>
            <person name="Krogan N.J."/>
        </authorList>
    </citation>
    <scope>INTERACTION WITH HOST RACK1</scope>
</reference>
<comment type="function">
    <text evidence="1 4">Plays a major role in the shutoff of the host protein expression by cleaving mRNAs probably via an endonuclease activity. This host shutoff allows the virus to escape from the host antiviral response (By similarity). Hijacks host RNA splicing machinery to selectively target host RNAs containing introns for destruction (By similarity). This may explain the preferential degradation of RNAs that have undergone co- or post-transcriptional processing (By similarity).</text>
</comment>
<comment type="subunit">
    <text evidence="5">Interacts with host RACK1.</text>
</comment>
<comment type="subcellular location">
    <subcellularLocation>
        <location evidence="4">Host cytoplasm</location>
    </subcellularLocation>
    <subcellularLocation>
        <location evidence="4">Host nucleus</location>
    </subcellularLocation>
</comment>
<comment type="alternative products">
    <event type="ribosomal frameshifting"/>
    <isoform>
        <id>P0DXO4-1</id>
        <name>PA-X</name>
        <sequence type="displayed"/>
    </isoform>
    <isoform>
        <id>Q5EP34-1</id>
        <name>PA</name>
        <sequence type="external"/>
    </isoform>
</comment>
<comment type="domain">
    <text evidence="1 4">The probable endonuclease active site in the N-terminus and the basic amino acid cluster in the C-terminus are important for the shutoff activity. The C-terminus acts as a nuclear localization signal (By similarity). The C-terminus is recruited to host protein complexes involved in nuclear Pol II RNA processing (By similarity).</text>
</comment>
<comment type="similarity">
    <text evidence="6">Belongs to the influenza viruses PA-X family.</text>
</comment>
<sequence>MEDFVRQCFNPMIVELAEKAMKEYGEDPKIETNKFAAICTHLEVCFMYSDFHFIDERSESIIVESGDPNALLKHRFEIIEGRDRTMAWTVVNSICNTTGVEKPKFLPDLYDYKENRFIEIGVTRREVHTYYLEKANKIKSEETHIHIFSFTGEEMATKADYTLDEESRARIKTRLFTIRQEMASRGLWDSFVNPREAKRQLKKNLKSLEPCADLQTKVSHRTSPALKTLEPMWMDSNRTAALRASFLKCQKK</sequence>
<accession>P0DXO4</accession>
<dbReference type="EMBL" id="AY818132">
    <property type="status" value="NOT_ANNOTATED_CDS"/>
    <property type="molecule type" value="Genomic_RNA"/>
</dbReference>
<dbReference type="Proteomes" id="UP000102152">
    <property type="component" value="Genome"/>
</dbReference>
<keyword id="KW-1132">Decay of host mRNAs by virus</keyword>
<keyword id="KW-1262">Eukaryotic host gene expression shutoff by virus</keyword>
<keyword id="KW-1035">Host cytoplasm</keyword>
<keyword id="KW-1190">Host gene expression shutoff by virus</keyword>
<keyword id="KW-1192">Host mRNA suppression by virus</keyword>
<keyword id="KW-1048">Host nucleus</keyword>
<keyword id="KW-0945">Host-virus interaction</keyword>
<keyword id="KW-0688">Ribosomal frameshifting</keyword>
<evidence type="ECO:0000250" key="1">
    <source>
        <dbReference type="UniProtKB" id="P0CK64"/>
    </source>
</evidence>
<evidence type="ECO:0000250" key="2">
    <source>
        <dbReference type="UniProtKB" id="P0CK68"/>
    </source>
</evidence>
<evidence type="ECO:0000250" key="3">
    <source>
        <dbReference type="UniProtKB" id="P0DJW8"/>
    </source>
</evidence>
<evidence type="ECO:0000250" key="4">
    <source>
        <dbReference type="UniProtKB" id="P0DXO5"/>
    </source>
</evidence>
<evidence type="ECO:0000269" key="5">
    <source>
    </source>
</evidence>
<evidence type="ECO:0000305" key="6"/>